<organism>
    <name type="scientific">Leptospira borgpetersenii serovar Hardjo-bovis (strain L550)</name>
    <dbReference type="NCBI Taxonomy" id="355276"/>
    <lineage>
        <taxon>Bacteria</taxon>
        <taxon>Pseudomonadati</taxon>
        <taxon>Spirochaetota</taxon>
        <taxon>Spirochaetia</taxon>
        <taxon>Leptospirales</taxon>
        <taxon>Leptospiraceae</taxon>
        <taxon>Leptospira</taxon>
    </lineage>
</organism>
<sequence length="281" mass="30736">MAALKFTKMEGIGNDYIYIDSTQANIRLTPEQIQKISNRNFGIGSDGVIFIRNSKQGDFMMDMYNSDGSSSEMCGNGIRCVAKYIYDHGLTNSKNPKIETGAGVLEVDLKIGSGNKVDFVSVNMGKPILVPSKIPVNWKDEEAIIDQTFEIAGKNLKFTAVSMGNPHCVIFVDDCDQFPVTGIGPLIERHPIFPKRINVEFVTVRGKDHFYQRTWERGAGETLACGTGACAVTVAGNLTGKSGKEVKIDLRGGTLRIQWQESGNVLMTGPAKEIFSGEIEV</sequence>
<keyword id="KW-0028">Amino-acid biosynthesis</keyword>
<keyword id="KW-0963">Cytoplasm</keyword>
<keyword id="KW-0413">Isomerase</keyword>
<keyword id="KW-0457">Lysine biosynthesis</keyword>
<proteinExistence type="inferred from homology"/>
<name>DAPF_LEPBL</name>
<accession>Q04X60</accession>
<reference key="1">
    <citation type="journal article" date="2006" name="Proc. Natl. Acad. Sci. U.S.A.">
        <title>Genome reduction in Leptospira borgpetersenii reflects limited transmission potential.</title>
        <authorList>
            <person name="Bulach D.M."/>
            <person name="Zuerner R.L."/>
            <person name="Wilson P."/>
            <person name="Seemann T."/>
            <person name="McGrath A."/>
            <person name="Cullen P.A."/>
            <person name="Davis J."/>
            <person name="Johnson M."/>
            <person name="Kuczek E."/>
            <person name="Alt D.P."/>
            <person name="Peterson-Burch B."/>
            <person name="Coppel R.L."/>
            <person name="Rood J.I."/>
            <person name="Davies J.K."/>
            <person name="Adler B."/>
        </authorList>
    </citation>
    <scope>NUCLEOTIDE SEQUENCE [LARGE SCALE GENOMIC DNA]</scope>
    <source>
        <strain>L550</strain>
    </source>
</reference>
<gene>
    <name evidence="1" type="primary">dapF</name>
    <name type="ordered locus">LBL_3025</name>
</gene>
<protein>
    <recommendedName>
        <fullName evidence="1">Diaminopimelate epimerase</fullName>
        <shortName evidence="1">DAP epimerase</shortName>
        <ecNumber evidence="1">5.1.1.7</ecNumber>
    </recommendedName>
    <alternativeName>
        <fullName evidence="1">PLP-independent amino acid racemase</fullName>
    </alternativeName>
</protein>
<feature type="chain" id="PRO_1000011898" description="Diaminopimelate epimerase">
    <location>
        <begin position="1"/>
        <end position="281"/>
    </location>
</feature>
<feature type="active site" description="Proton donor" evidence="1">
    <location>
        <position position="74"/>
    </location>
</feature>
<feature type="active site" description="Proton acceptor" evidence="1">
    <location>
        <position position="225"/>
    </location>
</feature>
<feature type="binding site" evidence="1">
    <location>
        <position position="14"/>
    </location>
    <ligand>
        <name>substrate</name>
    </ligand>
</feature>
<feature type="binding site" evidence="1">
    <location>
        <position position="65"/>
    </location>
    <ligand>
        <name>substrate</name>
    </ligand>
</feature>
<feature type="binding site" evidence="1">
    <location>
        <begin position="75"/>
        <end position="76"/>
    </location>
    <ligand>
        <name>substrate</name>
    </ligand>
</feature>
<feature type="binding site" evidence="1">
    <location>
        <position position="165"/>
    </location>
    <ligand>
        <name>substrate</name>
    </ligand>
</feature>
<feature type="binding site" evidence="1">
    <location>
        <position position="198"/>
    </location>
    <ligand>
        <name>substrate</name>
    </ligand>
</feature>
<feature type="binding site" evidence="1">
    <location>
        <begin position="216"/>
        <end position="217"/>
    </location>
    <ligand>
        <name>substrate</name>
    </ligand>
</feature>
<feature type="binding site" evidence="1">
    <location>
        <begin position="226"/>
        <end position="227"/>
    </location>
    <ligand>
        <name>substrate</name>
    </ligand>
</feature>
<feature type="site" description="Could be important to modulate the pK values of the two catalytic cysteine residues" evidence="1">
    <location>
        <position position="167"/>
    </location>
</feature>
<feature type="site" description="Could be important to modulate the pK values of the two catalytic cysteine residues" evidence="1">
    <location>
        <position position="216"/>
    </location>
</feature>
<evidence type="ECO:0000255" key="1">
    <source>
        <dbReference type="HAMAP-Rule" id="MF_00197"/>
    </source>
</evidence>
<comment type="function">
    <text evidence="1">Catalyzes the stereoinversion of LL-2,6-diaminopimelate (L,L-DAP) to meso-diaminopimelate (meso-DAP), a precursor of L-lysine and an essential component of the bacterial peptidoglycan.</text>
</comment>
<comment type="catalytic activity">
    <reaction evidence="1">
        <text>(2S,6S)-2,6-diaminopimelate = meso-2,6-diaminopimelate</text>
        <dbReference type="Rhea" id="RHEA:15393"/>
        <dbReference type="ChEBI" id="CHEBI:57609"/>
        <dbReference type="ChEBI" id="CHEBI:57791"/>
        <dbReference type="EC" id="5.1.1.7"/>
    </reaction>
</comment>
<comment type="pathway">
    <text evidence="1">Amino-acid biosynthesis; L-lysine biosynthesis via DAP pathway; DL-2,6-diaminopimelate from LL-2,6-diaminopimelate: step 1/1.</text>
</comment>
<comment type="subunit">
    <text evidence="1">Homodimer.</text>
</comment>
<comment type="subcellular location">
    <subcellularLocation>
        <location evidence="1">Cytoplasm</location>
    </subcellularLocation>
</comment>
<comment type="similarity">
    <text evidence="1">Belongs to the diaminopimelate epimerase family.</text>
</comment>
<dbReference type="EC" id="5.1.1.7" evidence="1"/>
<dbReference type="EMBL" id="CP000348">
    <property type="protein sequence ID" value="ABJ80335.1"/>
    <property type="molecule type" value="Genomic_DNA"/>
</dbReference>
<dbReference type="RefSeq" id="WP_002727865.1">
    <property type="nucleotide sequence ID" value="NC_008508.1"/>
</dbReference>
<dbReference type="SMR" id="Q04X60"/>
<dbReference type="KEGG" id="lbl:LBL_3025"/>
<dbReference type="HOGENOM" id="CLU_053306_3_0_12"/>
<dbReference type="UniPathway" id="UPA00034">
    <property type="reaction ID" value="UER00025"/>
</dbReference>
<dbReference type="GO" id="GO:0005829">
    <property type="term" value="C:cytosol"/>
    <property type="evidence" value="ECO:0007669"/>
    <property type="project" value="TreeGrafter"/>
</dbReference>
<dbReference type="GO" id="GO:0008837">
    <property type="term" value="F:diaminopimelate epimerase activity"/>
    <property type="evidence" value="ECO:0007669"/>
    <property type="project" value="UniProtKB-UniRule"/>
</dbReference>
<dbReference type="GO" id="GO:0009089">
    <property type="term" value="P:lysine biosynthetic process via diaminopimelate"/>
    <property type="evidence" value="ECO:0007669"/>
    <property type="project" value="UniProtKB-UniRule"/>
</dbReference>
<dbReference type="FunFam" id="3.10.310.10:FF:000001">
    <property type="entry name" value="Diaminopimelate epimerase"/>
    <property type="match status" value="1"/>
</dbReference>
<dbReference type="FunFam" id="3.10.310.10:FF:000004">
    <property type="entry name" value="Diaminopimelate epimerase"/>
    <property type="match status" value="1"/>
</dbReference>
<dbReference type="Gene3D" id="3.10.310.10">
    <property type="entry name" value="Diaminopimelate Epimerase, Chain A, domain 1"/>
    <property type="match status" value="2"/>
</dbReference>
<dbReference type="HAMAP" id="MF_00197">
    <property type="entry name" value="DAP_epimerase"/>
    <property type="match status" value="1"/>
</dbReference>
<dbReference type="InterPro" id="IPR018510">
    <property type="entry name" value="DAP_epimerase_AS"/>
</dbReference>
<dbReference type="InterPro" id="IPR001653">
    <property type="entry name" value="DAP_epimerase_DapF"/>
</dbReference>
<dbReference type="NCBIfam" id="TIGR00652">
    <property type="entry name" value="DapF"/>
    <property type="match status" value="1"/>
</dbReference>
<dbReference type="PANTHER" id="PTHR31689:SF0">
    <property type="entry name" value="DIAMINOPIMELATE EPIMERASE"/>
    <property type="match status" value="1"/>
</dbReference>
<dbReference type="PANTHER" id="PTHR31689">
    <property type="entry name" value="DIAMINOPIMELATE EPIMERASE, CHLOROPLASTIC"/>
    <property type="match status" value="1"/>
</dbReference>
<dbReference type="Pfam" id="PF01678">
    <property type="entry name" value="DAP_epimerase"/>
    <property type="match status" value="2"/>
</dbReference>
<dbReference type="SUPFAM" id="SSF54506">
    <property type="entry name" value="Diaminopimelate epimerase-like"/>
    <property type="match status" value="2"/>
</dbReference>
<dbReference type="PROSITE" id="PS01326">
    <property type="entry name" value="DAP_EPIMERASE"/>
    <property type="match status" value="1"/>
</dbReference>